<keyword id="KW-0165">Cleavage on pair of basic residues</keyword>
<keyword id="KW-1015">Disulfide bond</keyword>
<keyword id="KW-0872">Ion channel impairing toxin</keyword>
<keyword id="KW-0166">Nematocyst</keyword>
<keyword id="KW-0528">Neurotoxin</keyword>
<keyword id="KW-0632">Potassium channel impairing toxin</keyword>
<keyword id="KW-0964">Secreted</keyword>
<keyword id="KW-0732">Signal</keyword>
<keyword id="KW-0800">Toxin</keyword>
<keyword id="KW-1220">Voltage-gated potassium channel impairing toxin</keyword>
<reference key="1">
    <citation type="journal article" date="2012" name="Peptides">
        <title>Peptide fingerprinting of the neurotoxic fractions isolated from the secretions of sea anemones Stichodactyla helianthus and Bunodosoma granulifera. New members of the APETx-like family identified by a 454 pyrosequencing approach.</title>
        <authorList>
            <person name="Rodriguez A.A."/>
            <person name="Cassoli J.S."/>
            <person name="Sa F."/>
            <person name="Dong Z.Q."/>
            <person name="de Freitas J.C."/>
            <person name="Pimenta A.M."/>
            <person name="de Lima M.E."/>
            <person name="Konno K."/>
            <person name="Lee S.M."/>
            <person name="Garateix A."/>
            <person name="Zaharenko A.J."/>
        </authorList>
    </citation>
    <scope>NUCLEOTIDE SEQUENCE [MRNA]</scope>
</reference>
<reference key="2">
    <citation type="journal article" date="2012" name="Toxicon">
        <title>Development of a rational nomenclature for naming peptide and protein toxins from sea anemones.</title>
        <authorList>
            <person name="Oliveira J.S."/>
            <person name="Fuentes-Silva D."/>
            <person name="King G.F."/>
        </authorList>
    </citation>
    <scope>NOMENCLATURE</scope>
</reference>
<organism>
    <name type="scientific">Bunodosoma granuliferum</name>
    <name type="common">Red warty sea anemone</name>
    <dbReference type="NCBI Taxonomy" id="31164"/>
    <lineage>
        <taxon>Eukaryota</taxon>
        <taxon>Metazoa</taxon>
        <taxon>Cnidaria</taxon>
        <taxon>Anthozoa</taxon>
        <taxon>Hexacorallia</taxon>
        <taxon>Actiniaria</taxon>
        <taxon>Actiniidae</taxon>
        <taxon>Bunodosoma</taxon>
    </lineage>
</organism>
<comment type="function">
    <text evidence="2">Potently and selectively inhibits voltage-gated potassium channels Kv11/KCNH/ERG. Acts as a gating-modifier toxin that shifts the voltage-dependence of ERG activation in the positive direction and suppresses its current amplitudes elicited by strong depolarizing pulses that maximally activate the channels.</text>
</comment>
<comment type="subcellular location">
    <subcellularLocation>
        <location evidence="6">Secreted</location>
    </subcellularLocation>
    <subcellularLocation>
        <location evidence="6">Nematocyst</location>
    </subcellularLocation>
</comment>
<comment type="similarity">
    <text evidence="6">Belongs to the sea anemone type 3 (BDS) potassium channel toxin family.</text>
</comment>
<feature type="signal peptide" evidence="3">
    <location>
        <begin position="1"/>
        <end position="21"/>
    </location>
</feature>
<feature type="propeptide" id="PRO_0000433593" evidence="1">
    <location>
        <begin position="22"/>
        <end position="38"/>
    </location>
</feature>
<feature type="chain" id="PRO_0000433594" description="U-actitoxin-Bgr3d">
    <location>
        <begin position="41"/>
        <end position="79"/>
    </location>
</feature>
<feature type="disulfide bond" evidence="2">
    <location>
        <begin position="44"/>
        <end position="76"/>
    </location>
</feature>
<feature type="disulfide bond" evidence="2">
    <location>
        <begin position="46"/>
        <end position="69"/>
    </location>
</feature>
<feature type="disulfide bond" evidence="2">
    <location>
        <begin position="59"/>
        <end position="77"/>
    </location>
</feature>
<protein>
    <recommendedName>
        <fullName evidence="5">U-actitoxin-Bgr3d</fullName>
        <shortName evidence="5">U-AITX-Bgr3d</shortName>
    </recommendedName>
    <alternativeName>
        <fullName evidence="4">U-AITX-Bg1e</fullName>
    </alternativeName>
</protein>
<evidence type="ECO:0000250" key="1">
    <source>
        <dbReference type="UniProtKB" id="G0W2H8"/>
    </source>
</evidence>
<evidence type="ECO:0000250" key="2">
    <source>
        <dbReference type="UniProtKB" id="P61541"/>
    </source>
</evidence>
<evidence type="ECO:0000255" key="3"/>
<evidence type="ECO:0000303" key="4">
    <source>
    </source>
</evidence>
<evidence type="ECO:0000303" key="5">
    <source>
    </source>
</evidence>
<evidence type="ECO:0000305" key="6"/>
<name>BDS3D_BUNGR</name>
<sequence length="79" mass="8536">MSYERLLCLVLVASFIAASVAQHPGDAPRMEDDSSAIQRRGLPCGCRGKSGIYWFSGKCPGGYGYTTYCSYVIGLCCVK</sequence>
<dbReference type="EMBL" id="HE577148">
    <property type="protein sequence ID" value="CCC86606.1"/>
    <property type="molecule type" value="mRNA"/>
</dbReference>
<dbReference type="SMR" id="G0W2I1"/>
<dbReference type="GO" id="GO:0005576">
    <property type="term" value="C:extracellular region"/>
    <property type="evidence" value="ECO:0007669"/>
    <property type="project" value="UniProtKB-SubCell"/>
</dbReference>
<dbReference type="GO" id="GO:0042151">
    <property type="term" value="C:nematocyst"/>
    <property type="evidence" value="ECO:0007669"/>
    <property type="project" value="UniProtKB-SubCell"/>
</dbReference>
<dbReference type="GO" id="GO:0008200">
    <property type="term" value="F:ion channel inhibitor activity"/>
    <property type="evidence" value="ECO:0007669"/>
    <property type="project" value="InterPro"/>
</dbReference>
<dbReference type="GO" id="GO:0015459">
    <property type="term" value="F:potassium channel regulator activity"/>
    <property type="evidence" value="ECO:0007669"/>
    <property type="project" value="UniProtKB-KW"/>
</dbReference>
<dbReference type="GO" id="GO:0090729">
    <property type="term" value="F:toxin activity"/>
    <property type="evidence" value="ECO:0007669"/>
    <property type="project" value="UniProtKB-KW"/>
</dbReference>
<dbReference type="Gene3D" id="2.20.20.10">
    <property type="entry name" value="Anthopleurin-A"/>
    <property type="match status" value="1"/>
</dbReference>
<dbReference type="InterPro" id="IPR012414">
    <property type="entry name" value="BDS_K_chnl_tox"/>
</dbReference>
<dbReference type="InterPro" id="IPR023355">
    <property type="entry name" value="Myo_ane_neurotoxin_sf"/>
</dbReference>
<dbReference type="Pfam" id="PF07936">
    <property type="entry name" value="Defensin_4"/>
    <property type="match status" value="1"/>
</dbReference>
<dbReference type="SUPFAM" id="SSF57392">
    <property type="entry name" value="Defensin-like"/>
    <property type="match status" value="1"/>
</dbReference>
<proteinExistence type="inferred from homology"/>
<accession>G0W2I1</accession>